<sequence length="371" mass="41289">MERYSTPLIGPSFAALTNGSVTDKVTPDMAHLVHPYWNQFPAMEPKWAKFLAAYMVLIATISWCGNGVVIYIFSTTKSLRTPANLLVINLAISDFGIMITNTPMMGINLFYETWVLGPLMCDIYGGLGSAFGCSSILSMCMISLDRYNVIVKGMAGQPMTIKLAIMKIALIWFMASIWTLAPVFGWSRYVPEGNLTSCGIDYLERDWNPRSYLIFYSIFVYYLPLFLICYSYWFIIAAVSAHEKAMREQAKKMNVKSLRSSEDADKSAEGKLAKVALVTISLWFMAWTPYTIINTLGLFKYEGLTPLNTIWGACFAKSAACYNPIVYGISHPKYGIALKEKCPCCVFGKVDDGKASDATSQATNNESETKA</sequence>
<keyword id="KW-1003">Cell membrane</keyword>
<keyword id="KW-0966">Cell projection</keyword>
<keyword id="KW-0157">Chromophore</keyword>
<keyword id="KW-1015">Disulfide bond</keyword>
<keyword id="KW-0297">G-protein coupled receptor</keyword>
<keyword id="KW-0325">Glycoprotein</keyword>
<keyword id="KW-0472">Membrane</keyword>
<keyword id="KW-0597">Phosphoprotein</keyword>
<keyword id="KW-0600">Photoreceptor protein</keyword>
<keyword id="KW-0675">Receptor</keyword>
<keyword id="KW-0681">Retinal protein</keyword>
<keyword id="KW-0716">Sensory transduction</keyword>
<keyword id="KW-0807">Transducer</keyword>
<keyword id="KW-0812">Transmembrane</keyword>
<keyword id="KW-1133">Transmembrane helix</keyword>
<keyword id="KW-0844">Vision</keyword>
<proteinExistence type="evidence at protein level"/>
<gene>
    <name type="primary">NINAE</name>
    <name type="synonym">RH1</name>
</gene>
<name>OPS1_CALVI</name>
<reference key="1">
    <citation type="journal article" date="1990" name="J. Biol. Chem.">
        <title>Opsin of Calliphora peripheral photoreceptors R1-6. Homology with Drosophila Rh1 and posttranslational processing.</title>
        <authorList>
            <person name="Huber A."/>
            <person name="Smith D.P."/>
            <person name="Zuker C.S."/>
            <person name="Paulsen R."/>
        </authorList>
    </citation>
    <scope>NUCLEOTIDE SEQUENCE [MRNA]</scope>
</reference>
<comment type="function">
    <text>Visual pigments are the light-absorbing molecules that mediate vision. They consist of an apoprotein, opsin, covalently linked to cis-retinal.</text>
</comment>
<comment type="biophysicochemical properties">
    <absorption>
        <max>480 nm</max>
    </absorption>
</comment>
<comment type="subcellular location">
    <subcellularLocation>
        <location evidence="1">Cell projection</location>
        <location evidence="1">Rhabdomere membrane</location>
        <topology evidence="4">Multi-pass membrane protein</topology>
    </subcellularLocation>
</comment>
<comment type="PTM">
    <text>Phosphorylated on some or all of the serine and threonine residues present in the C-terminal region.</text>
</comment>
<comment type="miscellaneous">
    <text>Each eye is composed of 800 facets or ommatidia. Each ommatidium contains 8 photoreceptor cells (R1-R8), the R1 to R6 cells are outer cells, while R7 and R8 are inner cells.</text>
</comment>
<comment type="similarity">
    <text evidence="3">Belongs to the G-protein coupled receptor 1 family. Opsin subfamily.</text>
</comment>
<accession>P22269</accession>
<evidence type="ECO:0000250" key="1">
    <source>
        <dbReference type="UniProtKB" id="P06002"/>
    </source>
</evidence>
<evidence type="ECO:0000255" key="2"/>
<evidence type="ECO:0000255" key="3">
    <source>
        <dbReference type="PROSITE-ProRule" id="PRU00521"/>
    </source>
</evidence>
<evidence type="ECO:0000305" key="4"/>
<feature type="chain" id="PRO_0000197624" description="Opsin Rh1">
    <location>
        <begin position="1"/>
        <end position="371"/>
    </location>
</feature>
<feature type="topological domain" description="Extracellular">
    <location>
        <begin position="1"/>
        <end position="47"/>
    </location>
</feature>
<feature type="transmembrane region" description="Helical; Name=1" evidence="2">
    <location>
        <begin position="48"/>
        <end position="72"/>
    </location>
</feature>
<feature type="topological domain" description="Cytoplasmic">
    <location>
        <begin position="73"/>
        <end position="84"/>
    </location>
</feature>
<feature type="transmembrane region" description="Helical; Name=2" evidence="2">
    <location>
        <begin position="85"/>
        <end position="110"/>
    </location>
</feature>
<feature type="topological domain" description="Extracellular">
    <location>
        <begin position="111"/>
        <end position="124"/>
    </location>
</feature>
<feature type="transmembrane region" description="Helical; Name=3" evidence="2">
    <location>
        <begin position="125"/>
        <end position="144"/>
    </location>
</feature>
<feature type="topological domain" description="Cytoplasmic">
    <location>
        <begin position="145"/>
        <end position="163"/>
    </location>
</feature>
<feature type="transmembrane region" description="Helical; Name=4" evidence="2">
    <location>
        <begin position="164"/>
        <end position="187"/>
    </location>
</feature>
<feature type="topological domain" description="Extracellular">
    <location>
        <begin position="188"/>
        <end position="211"/>
    </location>
</feature>
<feature type="transmembrane region" description="Helical; Name=5" evidence="2">
    <location>
        <begin position="212"/>
        <end position="239"/>
    </location>
</feature>
<feature type="topological domain" description="Cytoplasmic">
    <location>
        <begin position="240"/>
        <end position="274"/>
    </location>
</feature>
<feature type="transmembrane region" description="Helical; Name=6" evidence="2">
    <location>
        <begin position="275"/>
        <end position="298"/>
    </location>
</feature>
<feature type="topological domain" description="Extracellular">
    <location>
        <begin position="299"/>
        <end position="305"/>
    </location>
</feature>
<feature type="transmembrane region" description="Helical; Name=7" evidence="2">
    <location>
        <begin position="306"/>
        <end position="330"/>
    </location>
</feature>
<feature type="topological domain" description="Cytoplasmic">
    <location>
        <begin position="331"/>
        <end position="371"/>
    </location>
</feature>
<feature type="modified residue" description="N6-(retinylidene)lysine">
    <location>
        <position position="317"/>
    </location>
</feature>
<feature type="glycosylation site" description="N-linked (GlcNAc...) asparagine" evidence="4">
    <location>
        <position position="18"/>
    </location>
</feature>
<feature type="disulfide bond" evidence="3">
    <location>
        <begin position="121"/>
        <end position="198"/>
    </location>
</feature>
<protein>
    <recommendedName>
        <fullName>Opsin Rh1</fullName>
    </recommendedName>
    <alternativeName>
        <fullName>Outer R1-R6 photoreceptor cells opsin</fullName>
    </alternativeName>
</protein>
<dbReference type="EMBL" id="M58334">
    <property type="protein sequence ID" value="AAA62725.1"/>
    <property type="molecule type" value="mRNA"/>
</dbReference>
<dbReference type="PIR" id="A39234">
    <property type="entry name" value="A39234"/>
</dbReference>
<dbReference type="SMR" id="P22269"/>
<dbReference type="GlyCosmos" id="P22269">
    <property type="glycosylation" value="1 site, No reported glycans"/>
</dbReference>
<dbReference type="GO" id="GO:0033583">
    <property type="term" value="C:rhabdomere membrane"/>
    <property type="evidence" value="ECO:0007669"/>
    <property type="project" value="UniProtKB-SubCell"/>
</dbReference>
<dbReference type="GO" id="GO:0008020">
    <property type="term" value="F:G protein-coupled photoreceptor activity"/>
    <property type="evidence" value="ECO:0007669"/>
    <property type="project" value="UniProtKB-ARBA"/>
</dbReference>
<dbReference type="GO" id="GO:0007602">
    <property type="term" value="P:phototransduction"/>
    <property type="evidence" value="ECO:0007669"/>
    <property type="project" value="UniProtKB-KW"/>
</dbReference>
<dbReference type="GO" id="GO:0007601">
    <property type="term" value="P:visual perception"/>
    <property type="evidence" value="ECO:0007669"/>
    <property type="project" value="UniProtKB-KW"/>
</dbReference>
<dbReference type="CDD" id="cd15079">
    <property type="entry name" value="7tmA_photoreceptors_insect"/>
    <property type="match status" value="1"/>
</dbReference>
<dbReference type="FunFam" id="1.20.1070.10:FF:000044">
    <property type="entry name" value="Opsin, ultraviolet-sensitive"/>
    <property type="match status" value="1"/>
</dbReference>
<dbReference type="Gene3D" id="1.20.1070.10">
    <property type="entry name" value="Rhodopsin 7-helix transmembrane proteins"/>
    <property type="match status" value="1"/>
</dbReference>
<dbReference type="InterPro" id="IPR050125">
    <property type="entry name" value="GPCR_opsins"/>
</dbReference>
<dbReference type="InterPro" id="IPR000276">
    <property type="entry name" value="GPCR_Rhodpsn"/>
</dbReference>
<dbReference type="InterPro" id="IPR017452">
    <property type="entry name" value="GPCR_Rhodpsn_7TM"/>
</dbReference>
<dbReference type="InterPro" id="IPR001760">
    <property type="entry name" value="Opsin"/>
</dbReference>
<dbReference type="InterPro" id="IPR001735">
    <property type="entry name" value="Opsin_RH1/RH2"/>
</dbReference>
<dbReference type="InterPro" id="IPR027430">
    <property type="entry name" value="Retinal_BS"/>
</dbReference>
<dbReference type="PANTHER" id="PTHR24240">
    <property type="entry name" value="OPSIN"/>
    <property type="match status" value="1"/>
</dbReference>
<dbReference type="Pfam" id="PF00001">
    <property type="entry name" value="7tm_1"/>
    <property type="match status" value="1"/>
</dbReference>
<dbReference type="PRINTS" id="PR00237">
    <property type="entry name" value="GPCRRHODOPSN"/>
</dbReference>
<dbReference type="PRINTS" id="PR00238">
    <property type="entry name" value="OPSIN"/>
</dbReference>
<dbReference type="PRINTS" id="PR00576">
    <property type="entry name" value="OPSINRH1RH2"/>
</dbReference>
<dbReference type="SUPFAM" id="SSF81321">
    <property type="entry name" value="Family A G protein-coupled receptor-like"/>
    <property type="match status" value="1"/>
</dbReference>
<dbReference type="PROSITE" id="PS00237">
    <property type="entry name" value="G_PROTEIN_RECEP_F1_1"/>
    <property type="match status" value="1"/>
</dbReference>
<dbReference type="PROSITE" id="PS50262">
    <property type="entry name" value="G_PROTEIN_RECEP_F1_2"/>
    <property type="match status" value="1"/>
</dbReference>
<dbReference type="PROSITE" id="PS00238">
    <property type="entry name" value="OPSIN"/>
    <property type="match status" value="1"/>
</dbReference>
<organism>
    <name type="scientific">Calliphora vicina</name>
    <name type="common">Blue blowfly</name>
    <name type="synonym">Calliphora erythrocephala</name>
    <dbReference type="NCBI Taxonomy" id="7373"/>
    <lineage>
        <taxon>Eukaryota</taxon>
        <taxon>Metazoa</taxon>
        <taxon>Ecdysozoa</taxon>
        <taxon>Arthropoda</taxon>
        <taxon>Hexapoda</taxon>
        <taxon>Insecta</taxon>
        <taxon>Pterygota</taxon>
        <taxon>Neoptera</taxon>
        <taxon>Endopterygota</taxon>
        <taxon>Diptera</taxon>
        <taxon>Brachycera</taxon>
        <taxon>Muscomorpha</taxon>
        <taxon>Oestroidea</taxon>
        <taxon>Calliphoridae</taxon>
        <taxon>Calliphorinae</taxon>
        <taxon>Calliphora</taxon>
    </lineage>
</organism>